<name>PGDA2_BACCR</name>
<gene>
    <name evidence="8" type="ordered locus">BC_1974</name>
</gene>
<organism>
    <name type="scientific">Bacillus cereus (strain ATCC 14579 / DSM 31 / CCUG 7414 / JCM 2152 / NBRC 15305 / NCIMB 9373 / NCTC 2599 / NRRL B-3711)</name>
    <dbReference type="NCBI Taxonomy" id="226900"/>
    <lineage>
        <taxon>Bacteria</taxon>
        <taxon>Bacillati</taxon>
        <taxon>Bacillota</taxon>
        <taxon>Bacilli</taxon>
        <taxon>Bacillales</taxon>
        <taxon>Bacillaceae</taxon>
        <taxon>Bacillus</taxon>
        <taxon>Bacillus cereus group</taxon>
    </lineage>
</organism>
<comment type="function">
    <text evidence="4">Catalyzes the deacetylation of N-acetylglucosamine (GlcNAc) residues in peptidoglycan.</text>
</comment>
<comment type="catalytic activity">
    <reaction evidence="4">
        <text>peptidoglycan-N-acetyl-D-glucosamine + H2O = peptidoglycan-D-glucosamine + acetate.</text>
        <dbReference type="EC" id="3.5.1.104"/>
    </reaction>
</comment>
<comment type="cofactor">
    <cofactor evidence="3 4">
        <name>Zn(2+)</name>
        <dbReference type="ChEBI" id="CHEBI:29105"/>
    </cofactor>
    <cofactor evidence="4">
        <name>Co(2+)</name>
        <dbReference type="ChEBI" id="CHEBI:48828"/>
    </cofactor>
    <cofactor evidence="4">
        <name>Ni(2+)</name>
        <dbReference type="ChEBI" id="CHEBI:49786"/>
    </cofactor>
</comment>
<comment type="activity regulation">
    <text evidence="4">Inhibited by the hydroxamate N-hydroxy-4-(naphthalene-1-yl)benzamide (NHNB).</text>
</comment>
<comment type="biophysicochemical properties">
    <kinetics>
        <KM evidence="4">4.8 mM for GlcNAc(5)</KM>
        <text evidence="4">kcat is 3000 sec(-1) with GlcNAc(5) as substrate.</text>
    </kinetics>
</comment>
<comment type="subcellular location">
    <subcellularLocation>
        <location evidence="6">Cell membrane</location>
        <topology evidence="1">Single-pass membrane protein</topology>
    </subcellularLocation>
</comment>
<comment type="similarity">
    <text evidence="6">Belongs to the polysaccharide deacetylase family.</text>
</comment>
<feature type="chain" id="PRO_0000447693" description="Peptidoglycan-N-acetylglucosamine deacetylase BC_1974">
    <location>
        <begin position="1"/>
        <end position="273"/>
    </location>
</feature>
<feature type="transmembrane region" description="Helical" evidence="1">
    <location>
        <begin position="10"/>
        <end position="30"/>
    </location>
</feature>
<feature type="domain" description="NodB homology" evidence="2">
    <location>
        <begin position="69"/>
        <end position="255"/>
    </location>
</feature>
<feature type="active site" description="Proton acceptor" evidence="7">
    <location>
        <position position="76"/>
    </location>
</feature>
<feature type="active site" description="Proton donor" evidence="7">
    <location>
        <position position="230"/>
    </location>
</feature>
<feature type="binding site" evidence="3">
    <location>
        <position position="77"/>
    </location>
    <ligand>
        <name>Zn(2+)</name>
        <dbReference type="ChEBI" id="CHEBI:29105"/>
    </ligand>
</feature>
<feature type="binding site" evidence="3">
    <location>
        <position position="126"/>
    </location>
    <ligand>
        <name>Zn(2+)</name>
        <dbReference type="ChEBI" id="CHEBI:29105"/>
    </ligand>
</feature>
<feature type="binding site" evidence="3">
    <location>
        <position position="130"/>
    </location>
    <ligand>
        <name>Zn(2+)</name>
        <dbReference type="ChEBI" id="CHEBI:29105"/>
    </ligand>
</feature>
<feature type="strand" evidence="16">
    <location>
        <begin position="69"/>
        <end position="78"/>
    </location>
</feature>
<feature type="helix" evidence="16">
    <location>
        <begin position="83"/>
        <end position="92"/>
    </location>
</feature>
<feature type="strand" evidence="16">
    <location>
        <begin position="98"/>
        <end position="101"/>
    </location>
</feature>
<feature type="helix" evidence="16">
    <location>
        <begin position="103"/>
        <end position="108"/>
    </location>
</feature>
<feature type="helix" evidence="16">
    <location>
        <begin position="110"/>
        <end position="118"/>
    </location>
</feature>
<feature type="strand" evidence="16">
    <location>
        <begin position="122"/>
        <end position="125"/>
    </location>
</feature>
<feature type="helix" evidence="16">
    <location>
        <begin position="132"/>
        <end position="135"/>
    </location>
</feature>
<feature type="turn" evidence="17">
    <location>
        <begin position="136"/>
        <end position="138"/>
    </location>
</feature>
<feature type="helix" evidence="16">
    <location>
        <begin position="141"/>
        <end position="156"/>
    </location>
</feature>
<feature type="turn" evidence="16">
    <location>
        <begin position="170"/>
        <end position="172"/>
    </location>
</feature>
<feature type="helix" evidence="16">
    <location>
        <begin position="175"/>
        <end position="183"/>
    </location>
</feature>
<feature type="strand" evidence="16">
    <location>
        <begin position="187"/>
        <end position="189"/>
    </location>
</feature>
<feature type="strand" evidence="16">
    <location>
        <begin position="192"/>
        <end position="194"/>
    </location>
</feature>
<feature type="helix" evidence="16">
    <location>
        <begin position="197"/>
        <end position="200"/>
    </location>
</feature>
<feature type="helix" evidence="16">
    <location>
        <begin position="205"/>
        <end position="219"/>
    </location>
</feature>
<feature type="strand" evidence="16">
    <location>
        <begin position="222"/>
        <end position="230"/>
    </location>
</feature>
<feature type="helix" evidence="16">
    <location>
        <begin position="234"/>
        <end position="249"/>
    </location>
</feature>
<feature type="strand" evidence="16">
    <location>
        <begin position="252"/>
        <end position="254"/>
    </location>
</feature>
<feature type="helix" evidence="16">
    <location>
        <begin position="259"/>
        <end position="261"/>
    </location>
</feature>
<keyword id="KW-0002">3D-structure</keyword>
<keyword id="KW-1003">Cell membrane</keyword>
<keyword id="KW-0170">Cobalt</keyword>
<keyword id="KW-0378">Hydrolase</keyword>
<keyword id="KW-0472">Membrane</keyword>
<keyword id="KW-0479">Metal-binding</keyword>
<keyword id="KW-0533">Nickel</keyword>
<keyword id="KW-1185">Reference proteome</keyword>
<keyword id="KW-0812">Transmembrane</keyword>
<keyword id="KW-1133">Transmembrane helix</keyword>
<keyword id="KW-0862">Zinc</keyword>
<sequence length="273" mass="30677">MEKALKIKQIVVVLIAIAAVAIGYYMFQSITSPAKAVAKQENVVQLASEQPKVEMNKTAPSRFNGKERKVAYLTFDDGPGKYTAELLNTLKQHDAKATFFLIGANVKEFPDLVKRENAEGHYVGMHSMTHNFAKLYKNGEYVNEMKEDQGLIANIIGKSPKLTRPPYGSMPGLNEGLRNKVVEGGFKVWDWTIDSLDWRYNKMPVDAAAAQIAQNVLTNATKPQEVILMHDIHPQSVAAVPAILKGLKEKGYEFEAYHEESHFPVNFWHDNRM</sequence>
<proteinExistence type="evidence at protein level"/>
<dbReference type="EC" id="3.5.1.104" evidence="4"/>
<dbReference type="EMBL" id="AE016877">
    <property type="protein sequence ID" value="AAP08945.1"/>
    <property type="molecule type" value="Genomic_DNA"/>
</dbReference>
<dbReference type="RefSeq" id="NP_831744.1">
    <property type="nucleotide sequence ID" value="NC_004722.1"/>
</dbReference>
<dbReference type="RefSeq" id="WP_000409484.1">
    <property type="nucleotide sequence ID" value="NZ_CP138336.1"/>
</dbReference>
<dbReference type="PDB" id="5N1J">
    <property type="method" value="X-ray"/>
    <property type="resolution" value="1.80 A"/>
    <property type="chains" value="A/B/C/D=68-273"/>
</dbReference>
<dbReference type="PDB" id="5N1P">
    <property type="method" value="X-ray"/>
    <property type="resolution" value="1.45 A"/>
    <property type="chains" value="A/B/C/D=68-273"/>
</dbReference>
<dbReference type="PDB" id="5NC6">
    <property type="method" value="X-ray"/>
    <property type="resolution" value="2.80 A"/>
    <property type="chains" value="A=69-273, B/C/D=1-273"/>
</dbReference>
<dbReference type="PDB" id="5NC9">
    <property type="method" value="X-ray"/>
    <property type="resolution" value="2.44 A"/>
    <property type="chains" value="A/B/C/D=27-273"/>
</dbReference>
<dbReference type="PDB" id="5NCD">
    <property type="method" value="X-ray"/>
    <property type="resolution" value="2.45 A"/>
    <property type="chains" value="A/B/C/D=27-273"/>
</dbReference>
<dbReference type="PDB" id="5NEK">
    <property type="method" value="X-ray"/>
    <property type="resolution" value="3.06 A"/>
    <property type="chains" value="A/B/C/D=27-273"/>
</dbReference>
<dbReference type="PDB" id="5NEL">
    <property type="method" value="X-ray"/>
    <property type="resolution" value="2.73 A"/>
    <property type="chains" value="A/B/C/D=27-273"/>
</dbReference>
<dbReference type="PDBsum" id="5N1J"/>
<dbReference type="PDBsum" id="5N1P"/>
<dbReference type="PDBsum" id="5NC6"/>
<dbReference type="PDBsum" id="5NC9"/>
<dbReference type="PDBsum" id="5NCD"/>
<dbReference type="PDBsum" id="5NEK"/>
<dbReference type="PDBsum" id="5NEL"/>
<dbReference type="SMR" id="Q81EJ6"/>
<dbReference type="STRING" id="226900.BC_1974"/>
<dbReference type="BindingDB" id="Q81EJ6"/>
<dbReference type="ChEMBL" id="CHEMBL4295614"/>
<dbReference type="KEGG" id="bce:BC1974"/>
<dbReference type="PATRIC" id="fig|226900.8.peg.1980"/>
<dbReference type="HOGENOM" id="CLU_021264_6_3_9"/>
<dbReference type="OrthoDB" id="258610at2"/>
<dbReference type="BRENDA" id="3.5.1.104">
    <property type="organism ID" value="648"/>
</dbReference>
<dbReference type="SABIO-RK" id="Q81EJ6"/>
<dbReference type="Proteomes" id="UP000001417">
    <property type="component" value="Chromosome"/>
</dbReference>
<dbReference type="GO" id="GO:0005886">
    <property type="term" value="C:plasma membrane"/>
    <property type="evidence" value="ECO:0007669"/>
    <property type="project" value="UniProtKB-SubCell"/>
</dbReference>
<dbReference type="GO" id="GO:0016810">
    <property type="term" value="F:hydrolase activity, acting on carbon-nitrogen (but not peptide) bonds"/>
    <property type="evidence" value="ECO:0007669"/>
    <property type="project" value="InterPro"/>
</dbReference>
<dbReference type="GO" id="GO:0046872">
    <property type="term" value="F:metal ion binding"/>
    <property type="evidence" value="ECO:0007669"/>
    <property type="project" value="UniProtKB-KW"/>
</dbReference>
<dbReference type="GO" id="GO:0005975">
    <property type="term" value="P:carbohydrate metabolic process"/>
    <property type="evidence" value="ECO:0007669"/>
    <property type="project" value="InterPro"/>
</dbReference>
<dbReference type="CDD" id="cd10944">
    <property type="entry name" value="CE4_SmPgdA_like"/>
    <property type="match status" value="1"/>
</dbReference>
<dbReference type="Gene3D" id="3.20.20.370">
    <property type="entry name" value="Glycoside hydrolase/deacetylase"/>
    <property type="match status" value="1"/>
</dbReference>
<dbReference type="InterPro" id="IPR011330">
    <property type="entry name" value="Glyco_hydro/deAcase_b/a-brl"/>
</dbReference>
<dbReference type="InterPro" id="IPR002509">
    <property type="entry name" value="NODB_dom"/>
</dbReference>
<dbReference type="InterPro" id="IPR054858">
    <property type="entry name" value="PgAcgDac"/>
</dbReference>
<dbReference type="InterPro" id="IPR050248">
    <property type="entry name" value="Polysacc_deacetylase_ArnD"/>
</dbReference>
<dbReference type="NCBIfam" id="NF045822">
    <property type="entry name" value="PgAcgDacpgdA2_Bac"/>
    <property type="match status" value="1"/>
</dbReference>
<dbReference type="PANTHER" id="PTHR10587">
    <property type="entry name" value="GLYCOSYL TRANSFERASE-RELATED"/>
    <property type="match status" value="1"/>
</dbReference>
<dbReference type="PANTHER" id="PTHR10587:SF125">
    <property type="entry name" value="POLYSACCHARIDE DEACETYLASE YHEN-RELATED"/>
    <property type="match status" value="1"/>
</dbReference>
<dbReference type="Pfam" id="PF01522">
    <property type="entry name" value="Polysacc_deac_1"/>
    <property type="match status" value="1"/>
</dbReference>
<dbReference type="SUPFAM" id="SSF88713">
    <property type="entry name" value="Glycoside hydrolase/deacetylase"/>
    <property type="match status" value="1"/>
</dbReference>
<dbReference type="PROSITE" id="PS51677">
    <property type="entry name" value="NODB"/>
    <property type="match status" value="1"/>
</dbReference>
<accession>Q81EJ6</accession>
<protein>
    <recommendedName>
        <fullName evidence="5">Peptidoglycan-N-acetylglucosamine deacetylase BC_1974</fullName>
        <shortName evidence="6">Peptidoglycan GlcNAc deacetylase</shortName>
        <ecNumber evidence="4">3.5.1.104</ecNumber>
    </recommendedName>
</protein>
<evidence type="ECO:0000255" key="1"/>
<evidence type="ECO:0000255" key="2">
    <source>
        <dbReference type="PROSITE-ProRule" id="PRU01014"/>
    </source>
</evidence>
<evidence type="ECO:0000269" key="3">
    <source>
    </source>
</evidence>
<evidence type="ECO:0000269" key="4">
    <source>
    </source>
</evidence>
<evidence type="ECO:0000303" key="5">
    <source>
    </source>
</evidence>
<evidence type="ECO:0000305" key="6"/>
<evidence type="ECO:0000305" key="7">
    <source>
    </source>
</evidence>
<evidence type="ECO:0000312" key="8">
    <source>
        <dbReference type="EMBL" id="AAP08945.1"/>
    </source>
</evidence>
<evidence type="ECO:0007744" key="9">
    <source>
        <dbReference type="PDB" id="5N1J"/>
    </source>
</evidence>
<evidence type="ECO:0007744" key="10">
    <source>
        <dbReference type="PDB" id="5N1P"/>
    </source>
</evidence>
<evidence type="ECO:0007744" key="11">
    <source>
        <dbReference type="PDB" id="5NC6"/>
    </source>
</evidence>
<evidence type="ECO:0007744" key="12">
    <source>
        <dbReference type="PDB" id="5NC9"/>
    </source>
</evidence>
<evidence type="ECO:0007744" key="13">
    <source>
        <dbReference type="PDB" id="5NCD"/>
    </source>
</evidence>
<evidence type="ECO:0007744" key="14">
    <source>
        <dbReference type="PDB" id="5NEK"/>
    </source>
</evidence>
<evidence type="ECO:0007744" key="15">
    <source>
        <dbReference type="PDB" id="5NEL"/>
    </source>
</evidence>
<evidence type="ECO:0007829" key="16">
    <source>
        <dbReference type="PDB" id="5N1P"/>
    </source>
</evidence>
<evidence type="ECO:0007829" key="17">
    <source>
        <dbReference type="PDB" id="5NCD"/>
    </source>
</evidence>
<reference key="1">
    <citation type="journal article" date="2003" name="Nature">
        <title>Genome sequence of Bacillus cereus and comparative analysis with Bacillus anthracis.</title>
        <authorList>
            <person name="Ivanova N."/>
            <person name="Sorokin A."/>
            <person name="Anderson I."/>
            <person name="Galleron N."/>
            <person name="Candelon B."/>
            <person name="Kapatral V."/>
            <person name="Bhattacharyya A."/>
            <person name="Reznik G."/>
            <person name="Mikhailova N."/>
            <person name="Lapidus A."/>
            <person name="Chu L."/>
            <person name="Mazur M."/>
            <person name="Goltsman E."/>
            <person name="Larsen N."/>
            <person name="D'Souza M."/>
            <person name="Walunas T."/>
            <person name="Grechkin Y."/>
            <person name="Pusch G."/>
            <person name="Haselkorn R."/>
            <person name="Fonstein M."/>
            <person name="Ehrlich S.D."/>
            <person name="Overbeek R."/>
            <person name="Kyrpides N.C."/>
        </authorList>
    </citation>
    <scope>NUCLEOTIDE SEQUENCE [LARGE SCALE GENOMIC DNA]</scope>
    <source>
        <strain>ATCC 14579 / DSM 31 / CCUG 7414 / JCM 2152 / NBRC 15305 / NCIMB 9373 / NCTC 2599 / NRRL B-3711</strain>
    </source>
</reference>
<reference key="2">
    <citation type="journal article" date="2018" name="Bioorg. Med. Chem.">
        <title>Polysaccharide deacetylases serve as new targets for the design of inhibitors against Bacillus anthracis and Bacillus cereus.</title>
        <authorList>
            <person name="Balomenou S."/>
            <person name="Koutsioulis D."/>
            <person name="Tomatsidou A."/>
            <person name="Tzanodaskalaki M."/>
            <person name="Petratos K."/>
            <person name="Bouriotis V."/>
        </authorList>
    </citation>
    <scope>FUNCTION</scope>
    <scope>CATALYTIC ACTIVITY</scope>
    <scope>COFACTOR</scope>
    <scope>ACTIVITY REGULATION</scope>
    <scope>BIOPHYSICOCHEMICAL PROPERTIES</scope>
</reference>
<reference evidence="9 10 11 12 13 14 15" key="3">
    <citation type="journal article" date="2018" name="Biochemistry">
        <title>Structures of the peptidoglycan N-acetylglucosamine deacetylase Bc1974 and its complexes with zinc metalloenzyme inhibitors.</title>
        <authorList>
            <person name="Giastas P."/>
            <person name="Andreou A."/>
            <person name="Papakyriakou A."/>
            <person name="Koutsioulis D."/>
            <person name="Balomenou S."/>
            <person name="Tzartos S.J."/>
            <person name="Bouriotis V."/>
            <person name="Eliopoulos E.E."/>
        </authorList>
    </citation>
    <scope>X-RAY CRYSTALLOGRAPHY (1.45 ANGSTROMS) IN COMPLEXES WITH ZINC AND ZINC METALLOENZYME INHIBITORS</scope>
    <scope>COFACTOR</scope>
    <scope>ACTIVE SITE</scope>
    <source>
        <strain>ATCC 14579 / DSM 31 / CCUG 7414 / JCM 2152 / NBRC 15305 / NCIMB 9373 / NCTC 2599 / NRRL B-3711</strain>
    </source>
</reference>